<proteinExistence type="inferred from homology"/>
<reference key="1">
    <citation type="journal article" date="2007" name="Am. Fern J.">
        <title>The complete plastid genome sequence of Angiopteris evecta (G. Forst.) Hoffm. (Marattiaceae).</title>
        <authorList>
            <person name="Roper J.M."/>
            <person name="Hansen S.K."/>
            <person name="Wolf P.G."/>
            <person name="Karol K.G."/>
            <person name="Mandoli D.F."/>
            <person name="Everett K.D.E."/>
            <person name="Kuehl J.V."/>
            <person name="Boore J.L."/>
        </authorList>
    </citation>
    <scope>NUCLEOTIDE SEQUENCE [LARGE SCALE GENOMIC DNA]</scope>
</reference>
<sequence length="250" mass="28416">MVLASNHSNIEIKSDIPLINSMESYSLDKNMSNSIISTNLNDFSNWARLSSLWPLLYGTSCCFIEFASLIGSRFDFDRYGLVPRSSPRQADLIITAGTVTMKMAPSLVRLYEQMPEPKYVIAMGACTITGGMFSTDSYSTVRGIDKLIPVDVYLPGCPPKPEAIIDAIIKLRKKVAQETYRDRTKNKRENRFFTSNHQFKFVPSIHTGQYISDQSSIPLLDLPLERTISEMRFDNKFFMNEEELLPKGRK</sequence>
<protein>
    <recommendedName>
        <fullName evidence="1">NAD(P)H-quinone oxidoreductase subunit K, chloroplastic</fullName>
        <ecNumber evidence="1">7.1.1.-</ecNumber>
    </recommendedName>
    <alternativeName>
        <fullName evidence="1">NAD(P)H dehydrogenase subunit K</fullName>
    </alternativeName>
    <alternativeName>
        <fullName evidence="1">NADH-plastoquinone oxidoreductase subunit K</fullName>
    </alternativeName>
</protein>
<gene>
    <name evidence="1" type="primary">ndhK</name>
</gene>
<comment type="function">
    <text evidence="1">NDH shuttles electrons from NAD(P)H:plastoquinone, via FMN and iron-sulfur (Fe-S) centers, to quinones in the photosynthetic chain and possibly in a chloroplast respiratory chain. The immediate electron acceptor for the enzyme in this species is believed to be plastoquinone. Couples the redox reaction to proton translocation, and thus conserves the redox energy in a proton gradient.</text>
</comment>
<comment type="catalytic activity">
    <reaction evidence="1">
        <text>a plastoquinone + NADH + (n+1) H(+)(in) = a plastoquinol + NAD(+) + n H(+)(out)</text>
        <dbReference type="Rhea" id="RHEA:42608"/>
        <dbReference type="Rhea" id="RHEA-COMP:9561"/>
        <dbReference type="Rhea" id="RHEA-COMP:9562"/>
        <dbReference type="ChEBI" id="CHEBI:15378"/>
        <dbReference type="ChEBI" id="CHEBI:17757"/>
        <dbReference type="ChEBI" id="CHEBI:57540"/>
        <dbReference type="ChEBI" id="CHEBI:57945"/>
        <dbReference type="ChEBI" id="CHEBI:62192"/>
    </reaction>
</comment>
<comment type="catalytic activity">
    <reaction evidence="1">
        <text>a plastoquinone + NADPH + (n+1) H(+)(in) = a plastoquinol + NADP(+) + n H(+)(out)</text>
        <dbReference type="Rhea" id="RHEA:42612"/>
        <dbReference type="Rhea" id="RHEA-COMP:9561"/>
        <dbReference type="Rhea" id="RHEA-COMP:9562"/>
        <dbReference type="ChEBI" id="CHEBI:15378"/>
        <dbReference type="ChEBI" id="CHEBI:17757"/>
        <dbReference type="ChEBI" id="CHEBI:57783"/>
        <dbReference type="ChEBI" id="CHEBI:58349"/>
        <dbReference type="ChEBI" id="CHEBI:62192"/>
    </reaction>
</comment>
<comment type="cofactor">
    <cofactor evidence="1">
        <name>[4Fe-4S] cluster</name>
        <dbReference type="ChEBI" id="CHEBI:49883"/>
    </cofactor>
    <text evidence="1">Binds 1 [4Fe-4S] cluster.</text>
</comment>
<comment type="subunit">
    <text evidence="1">NDH is composed of at least 16 different subunits, 5 of which are encoded in the nucleus.</text>
</comment>
<comment type="subcellular location">
    <subcellularLocation>
        <location evidence="1">Plastid</location>
        <location evidence="1">Chloroplast thylakoid membrane</location>
        <topology evidence="1">Peripheral membrane protein</topology>
        <orientation evidence="1">Stromal side</orientation>
    </subcellularLocation>
</comment>
<comment type="similarity">
    <text evidence="1">Belongs to the complex I 20 kDa subunit family.</text>
</comment>
<name>NDHK_ANGEV</name>
<evidence type="ECO:0000255" key="1">
    <source>
        <dbReference type="HAMAP-Rule" id="MF_01356"/>
    </source>
</evidence>
<organism>
    <name type="scientific">Angiopteris evecta</name>
    <name type="common">Mule's foot fern</name>
    <name type="synonym">Polypodium evectum</name>
    <dbReference type="NCBI Taxonomy" id="13825"/>
    <lineage>
        <taxon>Eukaryota</taxon>
        <taxon>Viridiplantae</taxon>
        <taxon>Streptophyta</taxon>
        <taxon>Embryophyta</taxon>
        <taxon>Tracheophyta</taxon>
        <taxon>Polypodiopsida</taxon>
        <taxon>Marattiidae</taxon>
        <taxon>Marattiales</taxon>
        <taxon>Marattiaceae</taxon>
        <taxon>Angiopteris</taxon>
    </lineage>
</organism>
<accession>A2T337</accession>
<keyword id="KW-0004">4Fe-4S</keyword>
<keyword id="KW-0150">Chloroplast</keyword>
<keyword id="KW-0408">Iron</keyword>
<keyword id="KW-0411">Iron-sulfur</keyword>
<keyword id="KW-0472">Membrane</keyword>
<keyword id="KW-0479">Metal-binding</keyword>
<keyword id="KW-0520">NAD</keyword>
<keyword id="KW-0521">NADP</keyword>
<keyword id="KW-0934">Plastid</keyword>
<keyword id="KW-0618">Plastoquinone</keyword>
<keyword id="KW-0874">Quinone</keyword>
<keyword id="KW-0793">Thylakoid</keyword>
<keyword id="KW-1278">Translocase</keyword>
<keyword id="KW-0813">Transport</keyword>
<dbReference type="EC" id="7.1.1.-" evidence="1"/>
<dbReference type="EMBL" id="DQ821119">
    <property type="protein sequence ID" value="ABG79604.1"/>
    <property type="molecule type" value="Genomic_DNA"/>
</dbReference>
<dbReference type="RefSeq" id="YP_001023705.2">
    <property type="nucleotide sequence ID" value="NC_008829.1"/>
</dbReference>
<dbReference type="SMR" id="A2T337"/>
<dbReference type="GeneID" id="4788221"/>
<dbReference type="GO" id="GO:0009535">
    <property type="term" value="C:chloroplast thylakoid membrane"/>
    <property type="evidence" value="ECO:0007669"/>
    <property type="project" value="UniProtKB-SubCell"/>
</dbReference>
<dbReference type="GO" id="GO:0045271">
    <property type="term" value="C:respiratory chain complex I"/>
    <property type="evidence" value="ECO:0007669"/>
    <property type="project" value="TreeGrafter"/>
</dbReference>
<dbReference type="GO" id="GO:0051539">
    <property type="term" value="F:4 iron, 4 sulfur cluster binding"/>
    <property type="evidence" value="ECO:0007669"/>
    <property type="project" value="UniProtKB-KW"/>
</dbReference>
<dbReference type="GO" id="GO:0005506">
    <property type="term" value="F:iron ion binding"/>
    <property type="evidence" value="ECO:0007669"/>
    <property type="project" value="UniProtKB-UniRule"/>
</dbReference>
<dbReference type="GO" id="GO:0008137">
    <property type="term" value="F:NADH dehydrogenase (ubiquinone) activity"/>
    <property type="evidence" value="ECO:0007669"/>
    <property type="project" value="InterPro"/>
</dbReference>
<dbReference type="GO" id="GO:0048038">
    <property type="term" value="F:quinone binding"/>
    <property type="evidence" value="ECO:0007669"/>
    <property type="project" value="UniProtKB-KW"/>
</dbReference>
<dbReference type="GO" id="GO:0009060">
    <property type="term" value="P:aerobic respiration"/>
    <property type="evidence" value="ECO:0007669"/>
    <property type="project" value="TreeGrafter"/>
</dbReference>
<dbReference type="GO" id="GO:0015990">
    <property type="term" value="P:electron transport coupled proton transport"/>
    <property type="evidence" value="ECO:0007669"/>
    <property type="project" value="TreeGrafter"/>
</dbReference>
<dbReference type="GO" id="GO:0019684">
    <property type="term" value="P:photosynthesis, light reaction"/>
    <property type="evidence" value="ECO:0007669"/>
    <property type="project" value="UniProtKB-UniRule"/>
</dbReference>
<dbReference type="FunFam" id="3.40.50.12280:FF:000003">
    <property type="entry name" value="NAD(P)H-quinone oxidoreductase subunit K, chloroplastic"/>
    <property type="match status" value="1"/>
</dbReference>
<dbReference type="Gene3D" id="3.40.50.12280">
    <property type="match status" value="1"/>
</dbReference>
<dbReference type="HAMAP" id="MF_01356">
    <property type="entry name" value="NDH1_NuoB"/>
    <property type="match status" value="1"/>
</dbReference>
<dbReference type="InterPro" id="IPR006137">
    <property type="entry name" value="NADH_UbQ_OxRdtase-like_20kDa"/>
</dbReference>
<dbReference type="InterPro" id="IPR006138">
    <property type="entry name" value="NADH_UQ_OxRdtase_20Kd_su"/>
</dbReference>
<dbReference type="NCBIfam" id="TIGR01957">
    <property type="entry name" value="nuoB_fam"/>
    <property type="match status" value="1"/>
</dbReference>
<dbReference type="NCBIfam" id="NF005012">
    <property type="entry name" value="PRK06411.1"/>
    <property type="match status" value="1"/>
</dbReference>
<dbReference type="PANTHER" id="PTHR11995">
    <property type="entry name" value="NADH DEHYDROGENASE"/>
    <property type="match status" value="1"/>
</dbReference>
<dbReference type="PANTHER" id="PTHR11995:SF14">
    <property type="entry name" value="NADH DEHYDROGENASE [UBIQUINONE] IRON-SULFUR PROTEIN 7, MITOCHONDRIAL"/>
    <property type="match status" value="1"/>
</dbReference>
<dbReference type="Pfam" id="PF01058">
    <property type="entry name" value="Oxidored_q6"/>
    <property type="match status" value="1"/>
</dbReference>
<dbReference type="SUPFAM" id="SSF56770">
    <property type="entry name" value="HydA/Nqo6-like"/>
    <property type="match status" value="1"/>
</dbReference>
<dbReference type="PROSITE" id="PS01150">
    <property type="entry name" value="COMPLEX1_20K"/>
    <property type="match status" value="1"/>
</dbReference>
<geneLocation type="chloroplast"/>
<feature type="chain" id="PRO_0000358519" description="NAD(P)H-quinone oxidoreductase subunit K, chloroplastic">
    <location>
        <begin position="1"/>
        <end position="250"/>
    </location>
</feature>
<feature type="binding site" evidence="1">
    <location>
        <position position="61"/>
    </location>
    <ligand>
        <name>[4Fe-4S] cluster</name>
        <dbReference type="ChEBI" id="CHEBI:49883"/>
    </ligand>
</feature>
<feature type="binding site" evidence="1">
    <location>
        <position position="62"/>
    </location>
    <ligand>
        <name>[4Fe-4S] cluster</name>
        <dbReference type="ChEBI" id="CHEBI:49883"/>
    </ligand>
</feature>
<feature type="binding site" evidence="1">
    <location>
        <position position="126"/>
    </location>
    <ligand>
        <name>[4Fe-4S] cluster</name>
        <dbReference type="ChEBI" id="CHEBI:49883"/>
    </ligand>
</feature>
<feature type="binding site" evidence="1">
    <location>
        <position position="157"/>
    </location>
    <ligand>
        <name>[4Fe-4S] cluster</name>
        <dbReference type="ChEBI" id="CHEBI:49883"/>
    </ligand>
</feature>